<sequence length="96" mass="10689">MNTIVKHTVGFIASIVLTLLAVFVTLYTNMTFHAKVTIIFGFAFIQAALQLLMFMHLTEGKDGRLQSFKVIFAIIITLVTVIGTYWVMQGGHSSHL</sequence>
<name>QOX4_STAEQ</name>
<proteinExistence type="inferred from homology"/>
<organism>
    <name type="scientific">Staphylococcus epidermidis (strain ATCC 35984 / DSM 28319 / BCRC 17069 / CCUG 31568 / BM 3577 / RP62A)</name>
    <dbReference type="NCBI Taxonomy" id="176279"/>
    <lineage>
        <taxon>Bacteria</taxon>
        <taxon>Bacillati</taxon>
        <taxon>Bacillota</taxon>
        <taxon>Bacilli</taxon>
        <taxon>Bacillales</taxon>
        <taxon>Staphylococcaceae</taxon>
        <taxon>Staphylococcus</taxon>
    </lineage>
</organism>
<reference key="1">
    <citation type="journal article" date="2005" name="J. Bacteriol.">
        <title>Insights on evolution of virulence and resistance from the complete genome analysis of an early methicillin-resistant Staphylococcus aureus strain and a biofilm-producing methicillin-resistant Staphylococcus epidermidis strain.</title>
        <authorList>
            <person name="Gill S.R."/>
            <person name="Fouts D.E."/>
            <person name="Archer G.L."/>
            <person name="Mongodin E.F."/>
            <person name="DeBoy R.T."/>
            <person name="Ravel J."/>
            <person name="Paulsen I.T."/>
            <person name="Kolonay J.F."/>
            <person name="Brinkac L.M."/>
            <person name="Beanan M.J."/>
            <person name="Dodson R.J."/>
            <person name="Daugherty S.C."/>
            <person name="Madupu R."/>
            <person name="Angiuoli S.V."/>
            <person name="Durkin A.S."/>
            <person name="Haft D.H."/>
            <person name="Vamathevan J.J."/>
            <person name="Khouri H."/>
            <person name="Utterback T.R."/>
            <person name="Lee C."/>
            <person name="Dimitrov G."/>
            <person name="Jiang L."/>
            <person name="Qin H."/>
            <person name="Weidman J."/>
            <person name="Tran K."/>
            <person name="Kang K.H."/>
            <person name="Hance I.R."/>
            <person name="Nelson K.E."/>
            <person name="Fraser C.M."/>
        </authorList>
    </citation>
    <scope>NUCLEOTIDE SEQUENCE [LARGE SCALE GENOMIC DNA]</scope>
    <source>
        <strain>ATCC 35984 / DSM 28319 / BCRC 17069 / CCUG 31568 / BM 3577 / RP62A</strain>
    </source>
</reference>
<comment type="function">
    <text evidence="1">Catalyzes quinol oxidation with the concomitant reduction of oxygen to water.</text>
</comment>
<comment type="catalytic activity">
    <reaction>
        <text>2 a quinol + O2 = 2 a quinone + 2 H2O</text>
        <dbReference type="Rhea" id="RHEA:55376"/>
        <dbReference type="ChEBI" id="CHEBI:15377"/>
        <dbReference type="ChEBI" id="CHEBI:15379"/>
        <dbReference type="ChEBI" id="CHEBI:24646"/>
        <dbReference type="ChEBI" id="CHEBI:132124"/>
    </reaction>
</comment>
<comment type="subcellular location">
    <subcellularLocation>
        <location evidence="1">Cell membrane</location>
        <topology evidence="1">Multi-pass membrane protein</topology>
    </subcellularLocation>
</comment>
<comment type="similarity">
    <text evidence="3">Belongs to the cytochrome c oxidase bacterial subunit 4 family.</text>
</comment>
<keyword id="KW-1003">Cell membrane</keyword>
<keyword id="KW-0472">Membrane</keyword>
<keyword id="KW-0560">Oxidoreductase</keyword>
<keyword id="KW-1185">Reference proteome</keyword>
<keyword id="KW-0812">Transmembrane</keyword>
<keyword id="KW-1133">Transmembrane helix</keyword>
<accession>Q5HQB2</accession>
<protein>
    <recommendedName>
        <fullName>Probable quinol oxidase subunit 4</fullName>
        <ecNumber>1.10.3.-</ecNumber>
    </recommendedName>
    <alternativeName>
        <fullName>Quinol oxidase polypeptide IV</fullName>
    </alternativeName>
</protein>
<feature type="chain" id="PRO_0000275867" description="Probable quinol oxidase subunit 4">
    <location>
        <begin position="1"/>
        <end position="96"/>
    </location>
</feature>
<feature type="transmembrane region" description="Helical" evidence="2">
    <location>
        <begin position="8"/>
        <end position="28"/>
    </location>
</feature>
<feature type="transmembrane region" description="Helical" evidence="2">
    <location>
        <begin position="36"/>
        <end position="56"/>
    </location>
</feature>
<feature type="transmembrane region" description="Helical" evidence="2">
    <location>
        <begin position="68"/>
        <end position="88"/>
    </location>
</feature>
<evidence type="ECO:0000250" key="1"/>
<evidence type="ECO:0000255" key="2"/>
<evidence type="ECO:0000305" key="3"/>
<gene>
    <name type="primary">qoxD</name>
    <name type="ordered locus">SERP0643</name>
</gene>
<dbReference type="EC" id="1.10.3.-"/>
<dbReference type="EMBL" id="CP000029">
    <property type="protein sequence ID" value="AAW53981.1"/>
    <property type="molecule type" value="Genomic_DNA"/>
</dbReference>
<dbReference type="RefSeq" id="WP_001831700.1">
    <property type="nucleotide sequence ID" value="NC_002976.3"/>
</dbReference>
<dbReference type="SMR" id="Q5HQB2"/>
<dbReference type="STRING" id="176279.SERP0643"/>
<dbReference type="GeneID" id="50019104"/>
<dbReference type="KEGG" id="ser:SERP0643"/>
<dbReference type="eggNOG" id="COG3125">
    <property type="taxonomic scope" value="Bacteria"/>
</dbReference>
<dbReference type="HOGENOM" id="CLU_140945_2_0_9"/>
<dbReference type="Proteomes" id="UP000000531">
    <property type="component" value="Chromosome"/>
</dbReference>
<dbReference type="GO" id="GO:0009319">
    <property type="term" value="C:cytochrome o ubiquinol oxidase complex"/>
    <property type="evidence" value="ECO:0007669"/>
    <property type="project" value="TreeGrafter"/>
</dbReference>
<dbReference type="GO" id="GO:0005886">
    <property type="term" value="C:plasma membrane"/>
    <property type="evidence" value="ECO:0007669"/>
    <property type="project" value="UniProtKB-SubCell"/>
</dbReference>
<dbReference type="GO" id="GO:0009486">
    <property type="term" value="F:cytochrome bo3 ubiquinol oxidase activity"/>
    <property type="evidence" value="ECO:0007669"/>
    <property type="project" value="TreeGrafter"/>
</dbReference>
<dbReference type="GO" id="GO:0016682">
    <property type="term" value="F:oxidoreductase activity, acting on diphenols and related substances as donors, oxygen as acceptor"/>
    <property type="evidence" value="ECO:0007669"/>
    <property type="project" value="InterPro"/>
</dbReference>
<dbReference type="GO" id="GO:0015078">
    <property type="term" value="F:proton transmembrane transporter activity"/>
    <property type="evidence" value="ECO:0007669"/>
    <property type="project" value="TreeGrafter"/>
</dbReference>
<dbReference type="GO" id="GO:0019646">
    <property type="term" value="P:aerobic electron transport chain"/>
    <property type="evidence" value="ECO:0007669"/>
    <property type="project" value="TreeGrafter"/>
</dbReference>
<dbReference type="GO" id="GO:0042773">
    <property type="term" value="P:ATP synthesis coupled electron transport"/>
    <property type="evidence" value="ECO:0007669"/>
    <property type="project" value="InterPro"/>
</dbReference>
<dbReference type="GO" id="GO:0015990">
    <property type="term" value="P:electron transport coupled proton transport"/>
    <property type="evidence" value="ECO:0007669"/>
    <property type="project" value="TreeGrafter"/>
</dbReference>
<dbReference type="InterPro" id="IPR005171">
    <property type="entry name" value="Cyt_c_oxidase_su4_prok"/>
</dbReference>
<dbReference type="InterPro" id="IPR050968">
    <property type="entry name" value="Cytochrome_c_oxidase_bac_sub4"/>
</dbReference>
<dbReference type="InterPro" id="IPR014250">
    <property type="entry name" value="QoxD"/>
</dbReference>
<dbReference type="NCBIfam" id="TIGR02901">
    <property type="entry name" value="QoxD"/>
    <property type="match status" value="1"/>
</dbReference>
<dbReference type="PANTHER" id="PTHR36835">
    <property type="entry name" value="CYTOCHROME BO(3) UBIQUINOL OXIDASE SUBUNIT 4"/>
    <property type="match status" value="1"/>
</dbReference>
<dbReference type="PANTHER" id="PTHR36835:SF1">
    <property type="entry name" value="CYTOCHROME BO(3) UBIQUINOL OXIDASE SUBUNIT 4"/>
    <property type="match status" value="1"/>
</dbReference>
<dbReference type="Pfam" id="PF03626">
    <property type="entry name" value="COX4_pro"/>
    <property type="match status" value="1"/>
</dbReference>